<organism>
    <name type="scientific">Mycobacterium tuberculosis (strain CDC 1551 / Oshkosh)</name>
    <dbReference type="NCBI Taxonomy" id="83331"/>
    <lineage>
        <taxon>Bacteria</taxon>
        <taxon>Bacillati</taxon>
        <taxon>Actinomycetota</taxon>
        <taxon>Actinomycetes</taxon>
        <taxon>Mycobacteriales</taxon>
        <taxon>Mycobacteriaceae</taxon>
        <taxon>Mycobacterium</taxon>
        <taxon>Mycobacterium tuberculosis complex</taxon>
    </lineage>
</organism>
<gene>
    <name type="ordered locus">MT3317</name>
</gene>
<comment type="sequence caution" evidence="3">
    <conflict type="erroneous initiation">
        <sequence resource="EMBL-CDS" id="AAK47659"/>
    </conflict>
</comment>
<protein>
    <recommendedName>
        <fullName>Biotinylated protein TB7.3</fullName>
    </recommendedName>
</protein>
<reference key="1">
    <citation type="journal article" date="2002" name="J. Bacteriol.">
        <title>Whole-genome comparison of Mycobacterium tuberculosis clinical and laboratory strains.</title>
        <authorList>
            <person name="Fleischmann R.D."/>
            <person name="Alland D."/>
            <person name="Eisen J.A."/>
            <person name="Carpenter L."/>
            <person name="White O."/>
            <person name="Peterson J.D."/>
            <person name="DeBoy R.T."/>
            <person name="Dodson R.J."/>
            <person name="Gwinn M.L."/>
            <person name="Haft D.H."/>
            <person name="Hickey E.K."/>
            <person name="Kolonay J.F."/>
            <person name="Nelson W.C."/>
            <person name="Umayam L.A."/>
            <person name="Ermolaeva M.D."/>
            <person name="Salzberg S.L."/>
            <person name="Delcher A."/>
            <person name="Utterback T.R."/>
            <person name="Weidman J.F."/>
            <person name="Khouri H.M."/>
            <person name="Gill J."/>
            <person name="Mikula A."/>
            <person name="Bishai W."/>
            <person name="Jacobs W.R. Jr."/>
            <person name="Venter J.C."/>
            <person name="Fraser C.M."/>
        </authorList>
    </citation>
    <scope>NUCLEOTIDE SEQUENCE [LARGE SCALE GENOMIC DNA]</scope>
    <source>
        <strain>CDC 1551 / Oshkosh</strain>
    </source>
</reference>
<feature type="initiator methionine" description="Removed" evidence="1">
    <location>
        <position position="1"/>
    </location>
</feature>
<feature type="chain" id="PRO_0000426913" description="Biotinylated protein TB7.3">
    <location>
        <begin position="2"/>
        <end position="71"/>
    </location>
</feature>
<feature type="domain" description="Biotinyl-binding" evidence="2">
    <location>
        <begin position="2"/>
        <end position="71"/>
    </location>
</feature>
<feature type="modified residue" description="N6-biotinyllysine" evidence="1 2">
    <location>
        <position position="37"/>
    </location>
</feature>
<sequence length="71" mass="7306">MAEDVRAEIVASVLEVVVNEGDQIDKGDVVVLLESMKMEIPVLAEAAGTVSKVAVSVGDVIQAGDLIAVIS</sequence>
<accession>P9WPQ0</accession>
<accession>L0TBW3</accession>
<accession>O05845</accession>
<accession>P0A510</accession>
<proteinExistence type="inferred from homology"/>
<keyword id="KW-0092">Biotin</keyword>
<keyword id="KW-1185">Reference proteome</keyword>
<name>BTB7_MYCTO</name>
<dbReference type="EMBL" id="AE000516">
    <property type="protein sequence ID" value="AAK47659.1"/>
    <property type="status" value="ALT_INIT"/>
    <property type="molecule type" value="Genomic_DNA"/>
</dbReference>
<dbReference type="PIR" id="F70596">
    <property type="entry name" value="F70596"/>
</dbReference>
<dbReference type="RefSeq" id="WP_003416887.1">
    <property type="nucleotide sequence ID" value="NZ_KK341227.1"/>
</dbReference>
<dbReference type="SMR" id="P9WPQ0"/>
<dbReference type="KEGG" id="mtc:MT3317"/>
<dbReference type="PATRIC" id="fig|83331.31.peg.3572"/>
<dbReference type="HOGENOM" id="CLU_016733_9_1_11"/>
<dbReference type="Proteomes" id="UP000001020">
    <property type="component" value="Chromosome"/>
</dbReference>
<dbReference type="CDD" id="cd06850">
    <property type="entry name" value="biotinyl_domain"/>
    <property type="match status" value="1"/>
</dbReference>
<dbReference type="Gene3D" id="2.40.50.100">
    <property type="match status" value="1"/>
</dbReference>
<dbReference type="InterPro" id="IPR050709">
    <property type="entry name" value="Biotin_Carboxyl_Carrier/Decarb"/>
</dbReference>
<dbReference type="InterPro" id="IPR000089">
    <property type="entry name" value="Biotin_lipoyl"/>
</dbReference>
<dbReference type="InterPro" id="IPR011053">
    <property type="entry name" value="Single_hybrid_motif"/>
</dbReference>
<dbReference type="NCBIfam" id="NF004547">
    <property type="entry name" value="PRK05889.1"/>
    <property type="match status" value="1"/>
</dbReference>
<dbReference type="PANTHER" id="PTHR45266">
    <property type="entry name" value="OXALOACETATE DECARBOXYLASE ALPHA CHAIN"/>
    <property type="match status" value="1"/>
</dbReference>
<dbReference type="PANTHER" id="PTHR45266:SF3">
    <property type="entry name" value="OXALOACETATE DECARBOXYLASE ALPHA CHAIN"/>
    <property type="match status" value="1"/>
</dbReference>
<dbReference type="Pfam" id="PF00364">
    <property type="entry name" value="Biotin_lipoyl"/>
    <property type="match status" value="1"/>
</dbReference>
<dbReference type="SUPFAM" id="SSF51230">
    <property type="entry name" value="Single hybrid motif"/>
    <property type="match status" value="1"/>
</dbReference>
<dbReference type="PROSITE" id="PS50968">
    <property type="entry name" value="BIOTINYL_LIPOYL"/>
    <property type="match status" value="1"/>
</dbReference>
<evidence type="ECO:0000250" key="1"/>
<evidence type="ECO:0000255" key="2">
    <source>
        <dbReference type="PROSITE-ProRule" id="PRU01066"/>
    </source>
</evidence>
<evidence type="ECO:0000305" key="3"/>